<proteinExistence type="evidence at protein level"/>
<protein>
    <recommendedName>
        <fullName>PDZ and LIM domain protein 7</fullName>
    </recommendedName>
    <alternativeName>
        <fullName>LIM mineralization protein</fullName>
        <shortName>LMP</shortName>
    </alternativeName>
    <alternativeName>
        <fullName>Protein enigma</fullName>
    </alternativeName>
</protein>
<accession>Q3TJD7</accession>
<accession>Q80ZY6</accession>
<accession>Q810S3</accession>
<accession>Q8C1S4</accession>
<accession>Q9CRA1</accession>
<comment type="function">
    <text evidence="1">May function as a scaffold on which the coordinated assembly of proteins can occur. May play a role as an adapter that, via its PDZ domain, localizes LIM-binding proteins to actin filaments of both skeletal muscle and nonmuscle tissues. Involved in both of the two fundamental mechanisms of bone formation, direct bone formation (e.g. embryonic flat bones mandible and cranium), and endochondral bone formation (e.g. embryonic long bone development). Plays a role during fracture repair. Involved in BMP6 signaling pathway (By similarity).</text>
</comment>
<comment type="subunit">
    <text evidence="1">Specifically binds via its LIM zinc-binding 3 domain (LIM 3) domain to endocytic codes of INSR, but not with those of IGF1R, LDLR, TFRC, or EGFR. Interacts with various PKC isoforms through the LIM zinc-binding domains. Binds to RET in a phosphorylation-independent manner via its LIM zinc-binding domain 2 (LIM 2). Probably part of a complex with SHC and the RET dimer. Interacts with TPM2, TBX4 and TBX5 (By similarity).</text>
</comment>
<comment type="subcellular location">
    <subcellularLocation>
        <location evidence="1">Cytoplasm</location>
    </subcellularLocation>
    <subcellularLocation>
        <location evidence="1">Cytoplasm</location>
        <location evidence="1">Cytoskeleton</location>
    </subcellularLocation>
    <text evidence="1">Colocalizes with RET to the cell periphery and in some cytoskeletal components. Colocalizes with TPM2 near the Z line in muscle. Colocalizes with TBX4 and TBX5 to actin filaments (By similarity).</text>
</comment>
<comment type="alternative products">
    <event type="alternative splicing"/>
    <isoform>
        <id>Q3TJD7-1</id>
        <name>1</name>
        <name>LMP-1</name>
        <sequence type="displayed"/>
    </isoform>
    <isoform>
        <id>Q3TJD7-2</id>
        <name>2</name>
        <sequence type="described" ref="VSP_016517 VSP_016520 VSP_016521"/>
    </isoform>
    <isoform>
        <id>Q3TJD7-3</id>
        <name>3</name>
        <sequence type="described" ref="VSP_016518 VSP_016519"/>
    </isoform>
</comment>
<comment type="developmental stage">
    <text evidence="7 8">At 13.5 dpc expressed in epaxial, intercostal, and other skeletal muscles at the brachial level, including the latissimus dorsi muscle. Expressed in the intrinsic and extrinsic muscle mass of the tongue. At 15 dpc expressed in mesenchymal tissue surrounding the cartilaginous anlage of immature bones, and in the future joint spaces. As endochondral ossification progresses, and the hypertrophic cartilage zone is replaced by mineralized bone, expression appears in the mineralizing portion of the bone. Expressed in mesoderm derived bones of the skull base and neural crest-derived endochondral bones such as the proximal mandible.</text>
</comment>
<comment type="domain">
    <text evidence="1">The LIM zinc-binding 2 domain (LIM 2) interacts with TBX4.</text>
</comment>
<comment type="domain">
    <text evidence="1">The LIM zinc-binding 3 domain (LIM 3) provides the structural basis for recognition of tyrosine-containing tight turn structures. This domain is necessary and sufficient for interaction with TBX5 (By similarity).</text>
</comment>
<comment type="domain">
    <text evidence="1">Anchored to cell periphery via its N-terminal PDZ domain.</text>
</comment>
<dbReference type="EMBL" id="AK003338">
    <property type="protein sequence ID" value="BAB22725.1"/>
    <property type="molecule type" value="mRNA"/>
</dbReference>
<dbReference type="EMBL" id="AK010141">
    <property type="protein sequence ID" value="BAB26726.1"/>
    <property type="molecule type" value="mRNA"/>
</dbReference>
<dbReference type="EMBL" id="AK003019">
    <property type="protein sequence ID" value="BAC25017.1"/>
    <property type="molecule type" value="mRNA"/>
</dbReference>
<dbReference type="EMBL" id="AK167476">
    <property type="protein sequence ID" value="BAE39558.1"/>
    <property type="molecule type" value="mRNA"/>
</dbReference>
<dbReference type="EMBL" id="BC045528">
    <property type="protein sequence ID" value="AAH45528.1"/>
    <property type="molecule type" value="mRNA"/>
</dbReference>
<dbReference type="EMBL" id="BC049565">
    <property type="protein sequence ID" value="AAH49565.1"/>
    <property type="molecule type" value="mRNA"/>
</dbReference>
<dbReference type="CCDS" id="CCDS26547.1">
    <molecule id="Q3TJD7-2"/>
</dbReference>
<dbReference type="CCDS" id="CCDS49275.1">
    <molecule id="Q3TJD7-1"/>
</dbReference>
<dbReference type="RefSeq" id="NP_001107560.1">
    <molecule id="Q3TJD7-1"/>
    <property type="nucleotide sequence ID" value="NM_001114088.2"/>
</dbReference>
<dbReference type="RefSeq" id="NP_080407.3">
    <molecule id="Q3TJD7-2"/>
    <property type="nucleotide sequence ID" value="NM_026131.4"/>
</dbReference>
<dbReference type="SMR" id="Q3TJD7"/>
<dbReference type="BioGRID" id="212162">
    <property type="interactions" value="5"/>
</dbReference>
<dbReference type="FunCoup" id="Q3TJD7">
    <property type="interactions" value="357"/>
</dbReference>
<dbReference type="STRING" id="10090.ENSMUSP00000047173"/>
<dbReference type="GlyGen" id="Q3TJD7">
    <property type="glycosylation" value="5 sites, 1 O-linked glycan (3 sites)"/>
</dbReference>
<dbReference type="iPTMnet" id="Q3TJD7"/>
<dbReference type="PhosphoSitePlus" id="Q3TJD7"/>
<dbReference type="jPOST" id="Q3TJD7"/>
<dbReference type="PaxDb" id="10090-ENSMUSP00000047173"/>
<dbReference type="PeptideAtlas" id="Q3TJD7"/>
<dbReference type="ProteomicsDB" id="287992">
    <molecule id="Q3TJD7-1"/>
</dbReference>
<dbReference type="ProteomicsDB" id="287993">
    <molecule id="Q3TJD7-2"/>
</dbReference>
<dbReference type="ProteomicsDB" id="287994">
    <molecule id="Q3TJD7-3"/>
</dbReference>
<dbReference type="Pumba" id="Q3TJD7"/>
<dbReference type="Antibodypedia" id="17442">
    <property type="antibodies" value="152 antibodies from 25 providers"/>
</dbReference>
<dbReference type="DNASU" id="67399"/>
<dbReference type="Ensembl" id="ENSMUST00000046246.13">
    <molecule id="Q3TJD7-1"/>
    <property type="protein sequence ID" value="ENSMUSP00000047173.7"/>
    <property type="gene ID" value="ENSMUSG00000021493.16"/>
</dbReference>
<dbReference type="Ensembl" id="ENSMUST00000069929.13">
    <molecule id="Q3TJD7-2"/>
    <property type="protein sequence ID" value="ENSMUSP00000064219.7"/>
    <property type="gene ID" value="ENSMUSG00000021493.16"/>
</dbReference>
<dbReference type="Ensembl" id="ENSMUST00000155098.8">
    <molecule id="Q3TJD7-1"/>
    <property type="protein sequence ID" value="ENSMUSP00000120465.2"/>
    <property type="gene ID" value="ENSMUSG00000021493.16"/>
</dbReference>
<dbReference type="GeneID" id="67399"/>
<dbReference type="KEGG" id="mmu:67399"/>
<dbReference type="UCSC" id="uc007qrg.3">
    <molecule id="Q3TJD7-1"/>
    <property type="organism name" value="mouse"/>
</dbReference>
<dbReference type="UCSC" id="uc007qri.3">
    <molecule id="Q3TJD7-2"/>
    <property type="organism name" value="mouse"/>
</dbReference>
<dbReference type="AGR" id="MGI:1914649"/>
<dbReference type="CTD" id="9260"/>
<dbReference type="MGI" id="MGI:1914649">
    <property type="gene designation" value="Pdlim7"/>
</dbReference>
<dbReference type="VEuPathDB" id="HostDB:ENSMUSG00000021493"/>
<dbReference type="eggNOG" id="KOG1703">
    <property type="taxonomic scope" value="Eukaryota"/>
</dbReference>
<dbReference type="GeneTree" id="ENSGT00940000159626"/>
<dbReference type="HOGENOM" id="CLU_001357_8_1_1"/>
<dbReference type="InParanoid" id="Q3TJD7"/>
<dbReference type="OMA" id="ACSKIIR"/>
<dbReference type="OrthoDB" id="5911912at2759"/>
<dbReference type="PhylomeDB" id="Q3TJD7"/>
<dbReference type="TreeFam" id="TF106408"/>
<dbReference type="Reactome" id="R-MMU-8853659">
    <property type="pathway name" value="RET signaling"/>
</dbReference>
<dbReference type="BioGRID-ORCS" id="67399">
    <property type="hits" value="3 hits in 76 CRISPR screens"/>
</dbReference>
<dbReference type="ChiTaRS" id="Pdlim7">
    <property type="organism name" value="mouse"/>
</dbReference>
<dbReference type="PRO" id="PR:Q3TJD7"/>
<dbReference type="Proteomes" id="UP000000589">
    <property type="component" value="Chromosome 13"/>
</dbReference>
<dbReference type="RNAct" id="Q3TJD7">
    <property type="molecule type" value="protein"/>
</dbReference>
<dbReference type="Bgee" id="ENSMUSG00000021493">
    <property type="expression patterns" value="Expressed in hindlimb stylopod muscle and 218 other cell types or tissues"/>
</dbReference>
<dbReference type="ExpressionAtlas" id="Q3TJD7">
    <property type="expression patterns" value="baseline and differential"/>
</dbReference>
<dbReference type="GO" id="GO:0005912">
    <property type="term" value="C:adherens junction"/>
    <property type="evidence" value="ECO:0007669"/>
    <property type="project" value="Ensembl"/>
</dbReference>
<dbReference type="GO" id="GO:0005737">
    <property type="term" value="C:cytoplasm"/>
    <property type="evidence" value="ECO:0000314"/>
    <property type="project" value="MGI"/>
</dbReference>
<dbReference type="GO" id="GO:0005925">
    <property type="term" value="C:focal adhesion"/>
    <property type="evidence" value="ECO:0007669"/>
    <property type="project" value="Ensembl"/>
</dbReference>
<dbReference type="GO" id="GO:0005654">
    <property type="term" value="C:nucleoplasm"/>
    <property type="evidence" value="ECO:0007669"/>
    <property type="project" value="Ensembl"/>
</dbReference>
<dbReference type="GO" id="GO:0001726">
    <property type="term" value="C:ruffle"/>
    <property type="evidence" value="ECO:0000314"/>
    <property type="project" value="MGI"/>
</dbReference>
<dbReference type="GO" id="GO:0001725">
    <property type="term" value="C:stress fiber"/>
    <property type="evidence" value="ECO:0000314"/>
    <property type="project" value="MGI"/>
</dbReference>
<dbReference type="GO" id="GO:0046872">
    <property type="term" value="F:metal ion binding"/>
    <property type="evidence" value="ECO:0007669"/>
    <property type="project" value="UniProtKB-KW"/>
</dbReference>
<dbReference type="GO" id="GO:0030036">
    <property type="term" value="P:actin cytoskeleton organization"/>
    <property type="evidence" value="ECO:0000353"/>
    <property type="project" value="MGI"/>
</dbReference>
<dbReference type="GO" id="GO:0030154">
    <property type="term" value="P:cell differentiation"/>
    <property type="evidence" value="ECO:0007669"/>
    <property type="project" value="UniProtKB-KW"/>
</dbReference>
<dbReference type="GO" id="GO:0001503">
    <property type="term" value="P:ossification"/>
    <property type="evidence" value="ECO:0007669"/>
    <property type="project" value="UniProtKB-KW"/>
</dbReference>
<dbReference type="CDD" id="cd09452">
    <property type="entry name" value="LIM1_Enigma"/>
    <property type="match status" value="1"/>
</dbReference>
<dbReference type="CDD" id="cd09456">
    <property type="entry name" value="LIM2_Enigma"/>
    <property type="match status" value="1"/>
</dbReference>
<dbReference type="CDD" id="cd09458">
    <property type="entry name" value="LIM3_Enigma"/>
    <property type="match status" value="1"/>
</dbReference>
<dbReference type="CDD" id="cd06753">
    <property type="entry name" value="PDZ_PDLIM-like"/>
    <property type="match status" value="1"/>
</dbReference>
<dbReference type="FunFam" id="2.30.42.10:FF:000019">
    <property type="entry name" value="LIM domain binding 3 isoform 1"/>
    <property type="match status" value="1"/>
</dbReference>
<dbReference type="FunFam" id="2.10.110.10:FF:000010">
    <property type="entry name" value="PDZ and LIM domain protein 5"/>
    <property type="match status" value="1"/>
</dbReference>
<dbReference type="FunFam" id="2.10.110.10:FF:000014">
    <property type="entry name" value="PDZ and LIM domain protein 5"/>
    <property type="match status" value="1"/>
</dbReference>
<dbReference type="FunFam" id="2.10.110.10:FF:000020">
    <property type="entry name" value="PDZ and LIM domain protein 5"/>
    <property type="match status" value="1"/>
</dbReference>
<dbReference type="Gene3D" id="2.30.42.10">
    <property type="match status" value="1"/>
</dbReference>
<dbReference type="Gene3D" id="2.10.110.10">
    <property type="entry name" value="Cysteine Rich Protein"/>
    <property type="match status" value="3"/>
</dbReference>
<dbReference type="InterPro" id="IPR001478">
    <property type="entry name" value="PDZ"/>
</dbReference>
<dbReference type="InterPro" id="IPR050604">
    <property type="entry name" value="PDZ-LIM_domain"/>
</dbReference>
<dbReference type="InterPro" id="IPR036034">
    <property type="entry name" value="PDZ_sf"/>
</dbReference>
<dbReference type="InterPro" id="IPR001781">
    <property type="entry name" value="Znf_LIM"/>
</dbReference>
<dbReference type="PANTHER" id="PTHR24214:SF0">
    <property type="entry name" value="PDZ AND LIM DOMAIN PROTEIN 7"/>
    <property type="match status" value="1"/>
</dbReference>
<dbReference type="PANTHER" id="PTHR24214">
    <property type="entry name" value="PDZ AND LIM DOMAIN PROTEIN ZASP"/>
    <property type="match status" value="1"/>
</dbReference>
<dbReference type="Pfam" id="PF00412">
    <property type="entry name" value="LIM"/>
    <property type="match status" value="3"/>
</dbReference>
<dbReference type="Pfam" id="PF00595">
    <property type="entry name" value="PDZ"/>
    <property type="match status" value="1"/>
</dbReference>
<dbReference type="SMART" id="SM00132">
    <property type="entry name" value="LIM"/>
    <property type="match status" value="3"/>
</dbReference>
<dbReference type="SMART" id="SM00228">
    <property type="entry name" value="PDZ"/>
    <property type="match status" value="1"/>
</dbReference>
<dbReference type="SUPFAM" id="SSF57716">
    <property type="entry name" value="Glucocorticoid receptor-like (DNA-binding domain)"/>
    <property type="match status" value="4"/>
</dbReference>
<dbReference type="SUPFAM" id="SSF50156">
    <property type="entry name" value="PDZ domain-like"/>
    <property type="match status" value="1"/>
</dbReference>
<dbReference type="PROSITE" id="PS00478">
    <property type="entry name" value="LIM_DOMAIN_1"/>
    <property type="match status" value="2"/>
</dbReference>
<dbReference type="PROSITE" id="PS50023">
    <property type="entry name" value="LIM_DOMAIN_2"/>
    <property type="match status" value="3"/>
</dbReference>
<dbReference type="PROSITE" id="PS50106">
    <property type="entry name" value="PDZ"/>
    <property type="match status" value="1"/>
</dbReference>
<evidence type="ECO:0000250" key="1"/>
<evidence type="ECO:0000250" key="2">
    <source>
        <dbReference type="UniProtKB" id="Q9NR12"/>
    </source>
</evidence>
<evidence type="ECO:0000250" key="3">
    <source>
        <dbReference type="UniProtKB" id="Q9Z1Z9"/>
    </source>
</evidence>
<evidence type="ECO:0000255" key="4">
    <source>
        <dbReference type="PROSITE-ProRule" id="PRU00125"/>
    </source>
</evidence>
<evidence type="ECO:0000255" key="5">
    <source>
        <dbReference type="PROSITE-ProRule" id="PRU00143"/>
    </source>
</evidence>
<evidence type="ECO:0000256" key="6">
    <source>
        <dbReference type="SAM" id="MobiDB-lite"/>
    </source>
</evidence>
<evidence type="ECO:0000269" key="7">
    <source>
    </source>
</evidence>
<evidence type="ECO:0000269" key="8">
    <source>
    </source>
</evidence>
<evidence type="ECO:0000303" key="9">
    <source>
    </source>
</evidence>
<evidence type="ECO:0000303" key="10">
    <source>
    </source>
</evidence>
<evidence type="ECO:0000305" key="11"/>
<evidence type="ECO:0007744" key="12">
    <source>
    </source>
</evidence>
<organism>
    <name type="scientific">Mus musculus</name>
    <name type="common">Mouse</name>
    <dbReference type="NCBI Taxonomy" id="10090"/>
    <lineage>
        <taxon>Eukaryota</taxon>
        <taxon>Metazoa</taxon>
        <taxon>Chordata</taxon>
        <taxon>Craniata</taxon>
        <taxon>Vertebrata</taxon>
        <taxon>Euteleostomi</taxon>
        <taxon>Mammalia</taxon>
        <taxon>Eutheria</taxon>
        <taxon>Euarchontoglires</taxon>
        <taxon>Glires</taxon>
        <taxon>Rodentia</taxon>
        <taxon>Myomorpha</taxon>
        <taxon>Muroidea</taxon>
        <taxon>Muridae</taxon>
        <taxon>Murinae</taxon>
        <taxon>Mus</taxon>
        <taxon>Mus</taxon>
    </lineage>
</organism>
<gene>
    <name type="primary">Pdlim7</name>
    <name type="synonym">Enigma</name>
</gene>
<feature type="chain" id="PRO_0000075882" description="PDZ and LIM domain protein 7">
    <location>
        <begin position="1"/>
        <end position="457"/>
    </location>
</feature>
<feature type="domain" description="PDZ" evidence="5">
    <location>
        <begin position="1"/>
        <end position="85"/>
    </location>
</feature>
<feature type="domain" description="LIM zinc-binding 1" evidence="4">
    <location>
        <begin position="280"/>
        <end position="338"/>
    </location>
</feature>
<feature type="domain" description="LIM zinc-binding 2" evidence="4">
    <location>
        <begin position="339"/>
        <end position="398"/>
    </location>
</feature>
<feature type="domain" description="LIM zinc-binding 3" evidence="4">
    <location>
        <begin position="399"/>
        <end position="457"/>
    </location>
</feature>
<feature type="region of interest" description="Disordered" evidence="6">
    <location>
        <begin position="82"/>
        <end position="166"/>
    </location>
</feature>
<feature type="region of interest" description="Disordered" evidence="6">
    <location>
        <begin position="186"/>
        <end position="226"/>
    </location>
</feature>
<feature type="compositionally biased region" description="Polar residues" evidence="6">
    <location>
        <begin position="126"/>
        <end position="135"/>
    </location>
</feature>
<feature type="compositionally biased region" description="Basic and acidic residues" evidence="6">
    <location>
        <begin position="144"/>
        <end position="157"/>
    </location>
</feature>
<feature type="modified residue" description="Phosphoserine" evidence="2">
    <location>
        <position position="78"/>
    </location>
</feature>
<feature type="modified residue" description="Phosphothreonine" evidence="3">
    <location>
        <position position="96"/>
    </location>
</feature>
<feature type="modified residue" description="Asymmetric dimethylarginine" evidence="2">
    <location>
        <position position="103"/>
    </location>
</feature>
<feature type="modified residue" description="Phosphoserine" evidence="2">
    <location>
        <position position="111"/>
    </location>
</feature>
<feature type="modified residue" description="Phosphoserine" evidence="12">
    <location>
        <position position="247"/>
    </location>
</feature>
<feature type="splice variant" id="VSP_016517" description="In isoform 2." evidence="9 10">
    <original>ALTPPADPPRYTFAPSASLNKTARPFGAPPPTDSTLRQNG</original>
    <variation>VQTSDK</variation>
    <location>
        <begin position="94"/>
        <end position="133"/>
    </location>
</feature>
<feature type="splice variant" id="VSP_016518" description="In isoform 3." evidence="10">
    <original>QLLRQPVPDASKQRLMEDTE</original>
    <variation>CRPLTNSCSDSRSPMPASSG</variation>
    <location>
        <begin position="134"/>
        <end position="153"/>
    </location>
</feature>
<feature type="splice variant" id="VSP_016519" description="In isoform 3." evidence="10">
    <location>
        <begin position="154"/>
        <end position="457"/>
    </location>
</feature>
<feature type="splice variant" id="VSP_016520" description="In isoform 2." evidence="9 10">
    <original>SQVPRTEAPAPASTIPQESWPGPTTPSPTSRP</original>
    <variation>REKYVLELQSPRYTRLRDWHHQRSAHVLNVQS</variation>
    <location>
        <begin position="191"/>
        <end position="222"/>
    </location>
</feature>
<feature type="splice variant" id="VSP_016521" description="In isoform 2." evidence="9 10">
    <location>
        <begin position="223"/>
        <end position="457"/>
    </location>
</feature>
<feature type="sequence conflict" description="In Ref. 1; BAB22725." evidence="11" ref="1">
    <original>Q</original>
    <variation>P</variation>
    <location>
        <position position="85"/>
    </location>
</feature>
<feature type="sequence conflict" description="In Ref. 2; AAH49565." evidence="11" ref="2">
    <original>D</original>
    <variation>G</variation>
    <location>
        <position position="151"/>
    </location>
</feature>
<name>PDLI7_MOUSE</name>
<keyword id="KW-0025">Alternative splicing</keyword>
<keyword id="KW-0963">Cytoplasm</keyword>
<keyword id="KW-0206">Cytoskeleton</keyword>
<keyword id="KW-0217">Developmental protein</keyword>
<keyword id="KW-0221">Differentiation</keyword>
<keyword id="KW-0440">LIM domain</keyword>
<keyword id="KW-0479">Metal-binding</keyword>
<keyword id="KW-0488">Methylation</keyword>
<keyword id="KW-0892">Osteogenesis</keyword>
<keyword id="KW-0597">Phosphoprotein</keyword>
<keyword id="KW-1185">Reference proteome</keyword>
<keyword id="KW-0677">Repeat</keyword>
<keyword id="KW-0862">Zinc</keyword>
<reference key="1">
    <citation type="journal article" date="2005" name="Science">
        <title>The transcriptional landscape of the mammalian genome.</title>
        <authorList>
            <person name="Carninci P."/>
            <person name="Kasukawa T."/>
            <person name="Katayama S."/>
            <person name="Gough J."/>
            <person name="Frith M.C."/>
            <person name="Maeda N."/>
            <person name="Oyama R."/>
            <person name="Ravasi T."/>
            <person name="Lenhard B."/>
            <person name="Wells C."/>
            <person name="Kodzius R."/>
            <person name="Shimokawa K."/>
            <person name="Bajic V.B."/>
            <person name="Brenner S.E."/>
            <person name="Batalov S."/>
            <person name="Forrest A.R."/>
            <person name="Zavolan M."/>
            <person name="Davis M.J."/>
            <person name="Wilming L.G."/>
            <person name="Aidinis V."/>
            <person name="Allen J.E."/>
            <person name="Ambesi-Impiombato A."/>
            <person name="Apweiler R."/>
            <person name="Aturaliya R.N."/>
            <person name="Bailey T.L."/>
            <person name="Bansal M."/>
            <person name="Baxter L."/>
            <person name="Beisel K.W."/>
            <person name="Bersano T."/>
            <person name="Bono H."/>
            <person name="Chalk A.M."/>
            <person name="Chiu K.P."/>
            <person name="Choudhary V."/>
            <person name="Christoffels A."/>
            <person name="Clutterbuck D.R."/>
            <person name="Crowe M.L."/>
            <person name="Dalla E."/>
            <person name="Dalrymple B.P."/>
            <person name="de Bono B."/>
            <person name="Della Gatta G."/>
            <person name="di Bernardo D."/>
            <person name="Down T."/>
            <person name="Engstrom P."/>
            <person name="Fagiolini M."/>
            <person name="Faulkner G."/>
            <person name="Fletcher C.F."/>
            <person name="Fukushima T."/>
            <person name="Furuno M."/>
            <person name="Futaki S."/>
            <person name="Gariboldi M."/>
            <person name="Georgii-Hemming P."/>
            <person name="Gingeras T.R."/>
            <person name="Gojobori T."/>
            <person name="Green R.E."/>
            <person name="Gustincich S."/>
            <person name="Harbers M."/>
            <person name="Hayashi Y."/>
            <person name="Hensch T.K."/>
            <person name="Hirokawa N."/>
            <person name="Hill D."/>
            <person name="Huminiecki L."/>
            <person name="Iacono M."/>
            <person name="Ikeo K."/>
            <person name="Iwama A."/>
            <person name="Ishikawa T."/>
            <person name="Jakt M."/>
            <person name="Kanapin A."/>
            <person name="Katoh M."/>
            <person name="Kawasawa Y."/>
            <person name="Kelso J."/>
            <person name="Kitamura H."/>
            <person name="Kitano H."/>
            <person name="Kollias G."/>
            <person name="Krishnan S.P."/>
            <person name="Kruger A."/>
            <person name="Kummerfeld S.K."/>
            <person name="Kurochkin I.V."/>
            <person name="Lareau L.F."/>
            <person name="Lazarevic D."/>
            <person name="Lipovich L."/>
            <person name="Liu J."/>
            <person name="Liuni S."/>
            <person name="McWilliam S."/>
            <person name="Madan Babu M."/>
            <person name="Madera M."/>
            <person name="Marchionni L."/>
            <person name="Matsuda H."/>
            <person name="Matsuzawa S."/>
            <person name="Miki H."/>
            <person name="Mignone F."/>
            <person name="Miyake S."/>
            <person name="Morris K."/>
            <person name="Mottagui-Tabar S."/>
            <person name="Mulder N."/>
            <person name="Nakano N."/>
            <person name="Nakauchi H."/>
            <person name="Ng P."/>
            <person name="Nilsson R."/>
            <person name="Nishiguchi S."/>
            <person name="Nishikawa S."/>
            <person name="Nori F."/>
            <person name="Ohara O."/>
            <person name="Okazaki Y."/>
            <person name="Orlando V."/>
            <person name="Pang K.C."/>
            <person name="Pavan W.J."/>
            <person name="Pavesi G."/>
            <person name="Pesole G."/>
            <person name="Petrovsky N."/>
            <person name="Piazza S."/>
            <person name="Reed J."/>
            <person name="Reid J.F."/>
            <person name="Ring B.Z."/>
            <person name="Ringwald M."/>
            <person name="Rost B."/>
            <person name="Ruan Y."/>
            <person name="Salzberg S.L."/>
            <person name="Sandelin A."/>
            <person name="Schneider C."/>
            <person name="Schoenbach C."/>
            <person name="Sekiguchi K."/>
            <person name="Semple C.A."/>
            <person name="Seno S."/>
            <person name="Sessa L."/>
            <person name="Sheng Y."/>
            <person name="Shibata Y."/>
            <person name="Shimada H."/>
            <person name="Shimada K."/>
            <person name="Silva D."/>
            <person name="Sinclair B."/>
            <person name="Sperling S."/>
            <person name="Stupka E."/>
            <person name="Sugiura K."/>
            <person name="Sultana R."/>
            <person name="Takenaka Y."/>
            <person name="Taki K."/>
            <person name="Tammoja K."/>
            <person name="Tan S.L."/>
            <person name="Tang S."/>
            <person name="Taylor M.S."/>
            <person name="Tegner J."/>
            <person name="Teichmann S.A."/>
            <person name="Ueda H.R."/>
            <person name="van Nimwegen E."/>
            <person name="Verardo R."/>
            <person name="Wei C.L."/>
            <person name="Yagi K."/>
            <person name="Yamanishi H."/>
            <person name="Zabarovsky E."/>
            <person name="Zhu S."/>
            <person name="Zimmer A."/>
            <person name="Hide W."/>
            <person name="Bult C."/>
            <person name="Grimmond S.M."/>
            <person name="Teasdale R.D."/>
            <person name="Liu E.T."/>
            <person name="Brusic V."/>
            <person name="Quackenbush J."/>
            <person name="Wahlestedt C."/>
            <person name="Mattick J.S."/>
            <person name="Hume D.A."/>
            <person name="Kai C."/>
            <person name="Sasaki D."/>
            <person name="Tomaru Y."/>
            <person name="Fukuda S."/>
            <person name="Kanamori-Katayama M."/>
            <person name="Suzuki M."/>
            <person name="Aoki J."/>
            <person name="Arakawa T."/>
            <person name="Iida J."/>
            <person name="Imamura K."/>
            <person name="Itoh M."/>
            <person name="Kato T."/>
            <person name="Kawaji H."/>
            <person name="Kawagashira N."/>
            <person name="Kawashima T."/>
            <person name="Kojima M."/>
            <person name="Kondo S."/>
            <person name="Konno H."/>
            <person name="Nakano K."/>
            <person name="Ninomiya N."/>
            <person name="Nishio T."/>
            <person name="Okada M."/>
            <person name="Plessy C."/>
            <person name="Shibata K."/>
            <person name="Shiraki T."/>
            <person name="Suzuki S."/>
            <person name="Tagami M."/>
            <person name="Waki K."/>
            <person name="Watahiki A."/>
            <person name="Okamura-Oho Y."/>
            <person name="Suzuki H."/>
            <person name="Kawai J."/>
            <person name="Hayashizaki Y."/>
        </authorList>
    </citation>
    <scope>NUCLEOTIDE SEQUENCE [LARGE SCALE MRNA] (ISOFORMS 1; 2 AND 3)</scope>
</reference>
<reference key="2">
    <citation type="journal article" date="2004" name="Genome Res.">
        <title>The status, quality, and expansion of the NIH full-length cDNA project: the Mammalian Gene Collection (MGC).</title>
        <authorList>
            <consortium name="The MGC Project Team"/>
        </authorList>
    </citation>
    <scope>NUCLEOTIDE SEQUENCE [LARGE SCALE MRNA] (ISOFORM 2)</scope>
    <scope>NUCLEOTIDE SEQUENCE [LARGE SCALE MRNA] OF 305-457 (ISOFORM 1)</scope>
    <source>
        <strain>FVB/N</strain>
        <tissue>Brain</tissue>
        <tissue>Colon</tissue>
    </source>
</reference>
<reference key="3">
    <citation type="journal article" date="1998" name="Endocrinology">
        <title>LMP-1, a LIM-domain protein, mediates BMP-6 effects on bone formation.</title>
        <authorList>
            <person name="Boden S.D."/>
            <person name="Liu Y."/>
            <person name="Hair G.A."/>
            <person name="Helms J.A."/>
            <person name="Hu D."/>
            <person name="Racine M."/>
            <person name="Nanes M.S."/>
            <person name="Titus L."/>
        </authorList>
    </citation>
    <scope>DEVELOPMENTAL STAGE</scope>
</reference>
<reference key="4">
    <citation type="journal article" date="1999" name="Mol. Biol. Cell">
        <title>The PDZ domain of the LIM protein enigma binds to beta-tropomyosin.</title>
        <authorList>
            <person name="Guy P.M."/>
            <person name="Kenny D.A."/>
            <person name="Gill G.N."/>
        </authorList>
    </citation>
    <scope>DEVELOPMENTAL STAGE</scope>
</reference>
<reference key="5">
    <citation type="journal article" date="2010" name="Cell">
        <title>A tissue-specific atlas of mouse protein phosphorylation and expression.</title>
        <authorList>
            <person name="Huttlin E.L."/>
            <person name="Jedrychowski M.P."/>
            <person name="Elias J.E."/>
            <person name="Goswami T."/>
            <person name="Rad R."/>
            <person name="Beausoleil S.A."/>
            <person name="Villen J."/>
            <person name="Haas W."/>
            <person name="Sowa M.E."/>
            <person name="Gygi S.P."/>
        </authorList>
    </citation>
    <scope>PHOSPHORYLATION [LARGE SCALE ANALYSIS] AT SER-247</scope>
    <scope>IDENTIFICATION BY MASS SPECTROMETRY [LARGE SCALE ANALYSIS]</scope>
    <source>
        <tissue>Spleen</tissue>
        <tissue>Testis</tissue>
    </source>
</reference>
<sequence length="457" mass="50119">MDSFKVVLEGPAPWGFRLQGGKDFNVPLSISRLTPGGKAAQAGVAVGDWVLNIDGENAGSLTHIEAQNKIRACGERLSLGLSRAQPVQSKPQKALTPPADPPRYTFAPSASLNKTARPFGAPPPTDSTLRQNGQLLRQPVPDASKQRLMEDTEDWRPRPGTGQSRSFRILAHLTGTEFMQDPDEEFMKKSSQVPRTEAPAPASTIPQESWPGPTTPSPTSRPPWAVDPAFAERYAPDKTSTVLTRHSQPATPTPLQNRTSIVQAAAGGGTGGGSNNGKTPVCHQCHKIIRGRYLVALGHAYHPEEFVCSQCGKVLEEGGFFEEKGAIFCPSCYDVRYAPNCAKCKKKITGEIMHALKMTWHVHCFTCAACKTPIRNRAFYMEEGAPYCERDYEKMFGTKCRGCDFKIDAGDRFLEALGFSWHDTCFVCAICQINLEGKTFYSKKDKPLCKSHAFSHV</sequence>